<keyword id="KW-0326">Glycosidase</keyword>
<keyword id="KW-0378">Hydrolase</keyword>
<comment type="function">
    <text evidence="1">Hydrolyzes both purine and pyrimidine ribonucleosides with a broad-substrate specificity.</text>
</comment>
<comment type="similarity">
    <text evidence="1">Belongs to the IUNH family. RihC subfamily.</text>
</comment>
<gene>
    <name evidence="1" type="primary">rihC</name>
    <name type="ordered locus">EFER_0023</name>
</gene>
<accession>B7LVN6</accession>
<protein>
    <recommendedName>
        <fullName evidence="1">Non-specific ribonucleoside hydrolase RihC</fullName>
        <ecNumber evidence="1">3.2.-.-</ecNumber>
    </recommendedName>
    <alternativeName>
        <fullName evidence="1">Purine/pyrimidine ribonucleoside hydrolase</fullName>
    </alternativeName>
</protein>
<sequence>MRLPIFLDTDPGIDDAVAIAAAIFAPELDLQLMTTVAGNVSVEKTTRNALQLLHFWNAEIPLAQGASVPLVRAPRNAASVHGESGMAGYDFVEHNRKPLEQPAFLAIRDALMRAPEPVTLVAIGPLTNIALLLSQCPECKPHIRRLVIMGGSAGRGNCTPNAEFNIAADPEAAACVFRSGIEIVMCGLDVTNQAILTPDYLGTLPELNRTGKMLHALFSHYRSGSMQSGLRMHDLCAIAWLVRPDLFTLKPCFVAVETQGEFTSGTTVVDIDGCLGKPANVQVALELDVKGFQQWVAEVLAKAS</sequence>
<name>RIHC_ESCF3</name>
<dbReference type="EC" id="3.2.-.-" evidence="1"/>
<dbReference type="EMBL" id="CU928158">
    <property type="protein sequence ID" value="CAQ87610.1"/>
    <property type="molecule type" value="Genomic_DNA"/>
</dbReference>
<dbReference type="RefSeq" id="WP_001239164.1">
    <property type="nucleotide sequence ID" value="NC_011740.1"/>
</dbReference>
<dbReference type="SMR" id="B7LVN6"/>
<dbReference type="GeneID" id="75058888"/>
<dbReference type="KEGG" id="efe:EFER_0023"/>
<dbReference type="HOGENOM" id="CLU_036838_2_2_6"/>
<dbReference type="OrthoDB" id="9797882at2"/>
<dbReference type="Proteomes" id="UP000000745">
    <property type="component" value="Chromosome"/>
</dbReference>
<dbReference type="GO" id="GO:0005829">
    <property type="term" value="C:cytosol"/>
    <property type="evidence" value="ECO:0007669"/>
    <property type="project" value="TreeGrafter"/>
</dbReference>
<dbReference type="GO" id="GO:0008477">
    <property type="term" value="F:purine nucleosidase activity"/>
    <property type="evidence" value="ECO:0007669"/>
    <property type="project" value="TreeGrafter"/>
</dbReference>
<dbReference type="GO" id="GO:0045437">
    <property type="term" value="F:uridine nucleosidase activity"/>
    <property type="evidence" value="ECO:0007669"/>
    <property type="project" value="UniProtKB-ARBA"/>
</dbReference>
<dbReference type="GO" id="GO:0006144">
    <property type="term" value="P:purine nucleobase metabolic process"/>
    <property type="evidence" value="ECO:0007669"/>
    <property type="project" value="UniProtKB-UniRule"/>
</dbReference>
<dbReference type="GO" id="GO:0006152">
    <property type="term" value="P:purine nucleoside catabolic process"/>
    <property type="evidence" value="ECO:0007669"/>
    <property type="project" value="TreeGrafter"/>
</dbReference>
<dbReference type="GO" id="GO:0006206">
    <property type="term" value="P:pyrimidine nucleobase metabolic process"/>
    <property type="evidence" value="ECO:0007669"/>
    <property type="project" value="UniProtKB-UniRule"/>
</dbReference>
<dbReference type="CDD" id="cd02651">
    <property type="entry name" value="nuc_hydro_IU_UC_XIUA"/>
    <property type="match status" value="1"/>
</dbReference>
<dbReference type="FunFam" id="3.90.245.10:FF:000002">
    <property type="entry name" value="Non-specific ribonucleoside hydrolase RihC"/>
    <property type="match status" value="1"/>
</dbReference>
<dbReference type="Gene3D" id="3.90.245.10">
    <property type="entry name" value="Ribonucleoside hydrolase-like"/>
    <property type="match status" value="1"/>
</dbReference>
<dbReference type="HAMAP" id="MF_01432">
    <property type="entry name" value="Nucleosid_hydro_RihC"/>
    <property type="match status" value="1"/>
</dbReference>
<dbReference type="InterPro" id="IPR015910">
    <property type="entry name" value="I/U_nuclsd_hydro_CS"/>
</dbReference>
<dbReference type="InterPro" id="IPR001910">
    <property type="entry name" value="Inosine/uridine_hydrolase_dom"/>
</dbReference>
<dbReference type="InterPro" id="IPR023186">
    <property type="entry name" value="IUNH"/>
</dbReference>
<dbReference type="InterPro" id="IPR022976">
    <property type="entry name" value="Nucleosid_hydro_RihC_nonspecif"/>
</dbReference>
<dbReference type="InterPro" id="IPR036452">
    <property type="entry name" value="Ribo_hydro-like"/>
</dbReference>
<dbReference type="NCBIfam" id="NF008036">
    <property type="entry name" value="PRK10768.1"/>
    <property type="match status" value="1"/>
</dbReference>
<dbReference type="PANTHER" id="PTHR12304">
    <property type="entry name" value="INOSINE-URIDINE PREFERRING NUCLEOSIDE HYDROLASE"/>
    <property type="match status" value="1"/>
</dbReference>
<dbReference type="PANTHER" id="PTHR12304:SF15">
    <property type="entry name" value="NON-SPECIFIC RIBONUCLEOSIDE HYDROLASE RIHC"/>
    <property type="match status" value="1"/>
</dbReference>
<dbReference type="Pfam" id="PF01156">
    <property type="entry name" value="IU_nuc_hydro"/>
    <property type="match status" value="1"/>
</dbReference>
<dbReference type="SUPFAM" id="SSF53590">
    <property type="entry name" value="Nucleoside hydrolase"/>
    <property type="match status" value="1"/>
</dbReference>
<dbReference type="PROSITE" id="PS01247">
    <property type="entry name" value="IUNH"/>
    <property type="match status" value="1"/>
</dbReference>
<evidence type="ECO:0000255" key="1">
    <source>
        <dbReference type="HAMAP-Rule" id="MF_01432"/>
    </source>
</evidence>
<reference key="1">
    <citation type="journal article" date="2009" name="PLoS Genet.">
        <title>Organised genome dynamics in the Escherichia coli species results in highly diverse adaptive paths.</title>
        <authorList>
            <person name="Touchon M."/>
            <person name="Hoede C."/>
            <person name="Tenaillon O."/>
            <person name="Barbe V."/>
            <person name="Baeriswyl S."/>
            <person name="Bidet P."/>
            <person name="Bingen E."/>
            <person name="Bonacorsi S."/>
            <person name="Bouchier C."/>
            <person name="Bouvet O."/>
            <person name="Calteau A."/>
            <person name="Chiapello H."/>
            <person name="Clermont O."/>
            <person name="Cruveiller S."/>
            <person name="Danchin A."/>
            <person name="Diard M."/>
            <person name="Dossat C."/>
            <person name="Karoui M.E."/>
            <person name="Frapy E."/>
            <person name="Garry L."/>
            <person name="Ghigo J.M."/>
            <person name="Gilles A.M."/>
            <person name="Johnson J."/>
            <person name="Le Bouguenec C."/>
            <person name="Lescat M."/>
            <person name="Mangenot S."/>
            <person name="Martinez-Jehanne V."/>
            <person name="Matic I."/>
            <person name="Nassif X."/>
            <person name="Oztas S."/>
            <person name="Petit M.A."/>
            <person name="Pichon C."/>
            <person name="Rouy Z."/>
            <person name="Ruf C.S."/>
            <person name="Schneider D."/>
            <person name="Tourret J."/>
            <person name="Vacherie B."/>
            <person name="Vallenet D."/>
            <person name="Medigue C."/>
            <person name="Rocha E.P.C."/>
            <person name="Denamur E."/>
        </authorList>
    </citation>
    <scope>NUCLEOTIDE SEQUENCE [LARGE SCALE GENOMIC DNA]</scope>
    <source>
        <strain>ATCC 35469 / DSM 13698 / BCRC 15582 / CCUG 18766 / IAM 14443 / JCM 21226 / LMG 7866 / NBRC 102419 / NCTC 12128 / CDC 0568-73</strain>
    </source>
</reference>
<proteinExistence type="inferred from homology"/>
<feature type="chain" id="PRO_1000145816" description="Non-specific ribonucleoside hydrolase RihC">
    <location>
        <begin position="1"/>
        <end position="304"/>
    </location>
</feature>
<feature type="active site" evidence="1">
    <location>
        <position position="233"/>
    </location>
</feature>
<organism>
    <name type="scientific">Escherichia fergusonii (strain ATCC 35469 / DSM 13698 / CCUG 18766 / IAM 14443 / JCM 21226 / LMG 7866 / NBRC 102419 / NCTC 12128 / CDC 0568-73)</name>
    <dbReference type="NCBI Taxonomy" id="585054"/>
    <lineage>
        <taxon>Bacteria</taxon>
        <taxon>Pseudomonadati</taxon>
        <taxon>Pseudomonadota</taxon>
        <taxon>Gammaproteobacteria</taxon>
        <taxon>Enterobacterales</taxon>
        <taxon>Enterobacteriaceae</taxon>
        <taxon>Escherichia</taxon>
    </lineage>
</organism>